<organism>
    <name type="scientific">Invertebrate iridescent virus 3</name>
    <name type="common">IIV-3</name>
    <name type="synonym">Mosquito iridescent virus</name>
    <dbReference type="NCBI Taxonomy" id="345201"/>
    <lineage>
        <taxon>Viruses</taxon>
        <taxon>Varidnaviria</taxon>
        <taxon>Bamfordvirae</taxon>
        <taxon>Nucleocytoviricota</taxon>
        <taxon>Megaviricetes</taxon>
        <taxon>Pimascovirales</taxon>
        <taxon>Iridoviridae</taxon>
        <taxon>Betairidovirinae</taxon>
        <taxon>Chloriridovirus</taxon>
    </lineage>
</organism>
<sequence length="380" mass="43677">MGIKNLTQFLKKYKVYETIDVAELKYSKICIDTPMFLYKFVSQYPNSNEWLGCFVTLITWLRKWNIHPTFVFEGKAPPEKNQTQEARKESRQKIVSKTDAIEQDLRTYLKSGTITPLLLDTWQKIRSKSTKSLLVKRPLNLIVKNFINVDEIRLEIDRRRKYEFSITFAHVNLLKELLDLMGVGYIQSKGEAEADCVSLWYNNAVDYIVSEDTDVLAYTFAGGAPGTSTPKKVPNTTDLKVITGFNVGESSATIISKQRVLSTLKMTAESFKDFCIMCGTDYNKNIFRVGVEKAYKYISDYKVIENVPLDTSVLDHHNVRKIFRVKKSIKYADKVQWSKYPSDNFVEVLNTFIWTHAGGTVDSDHVFRVLTDPALDIVFE</sequence>
<name>VF369_IIV3</name>
<gene>
    <name type="ORF">IIV3-076L</name>
</gene>
<comment type="function">
    <text evidence="2">Probable endonuclease.</text>
</comment>
<comment type="cofactor">
    <cofactor evidence="1">
        <name>Mg(2+)</name>
        <dbReference type="ChEBI" id="CHEBI:18420"/>
    </cofactor>
    <text evidence="1">Binds 2 magnesium ions per subunit.</text>
</comment>
<comment type="subcellular location">
    <subcellularLocation>
        <location evidence="1">Host nucleus</location>
    </subcellularLocation>
</comment>
<comment type="similarity">
    <text evidence="2">Belongs to the XPG/RAD2 endonuclease family.</text>
</comment>
<keyword id="KW-0255">Endonuclease</keyword>
<keyword id="KW-1048">Host nucleus</keyword>
<keyword id="KW-0378">Hydrolase</keyword>
<keyword id="KW-0460">Magnesium</keyword>
<keyword id="KW-0479">Metal-binding</keyword>
<keyword id="KW-0540">Nuclease</keyword>
<keyword id="KW-1185">Reference proteome</keyword>
<organismHost>
    <name type="scientific">Aedes vexans</name>
    <name type="common">Inland floodwater mosquito</name>
    <name type="synonym">Culex vexans</name>
    <dbReference type="NCBI Taxonomy" id="7163"/>
</organismHost>
<organismHost>
    <name type="scientific">Culex territans</name>
    <dbReference type="NCBI Taxonomy" id="42431"/>
</organismHost>
<organismHost>
    <name type="scientific">Culiseta annulata</name>
    <dbReference type="NCBI Taxonomy" id="332058"/>
</organismHost>
<organismHost>
    <name type="scientific">Ochlerotatus sollicitans</name>
    <name type="common">eastern saltmarsh mosquito</name>
    <dbReference type="NCBI Taxonomy" id="310513"/>
</organismHost>
<organismHost>
    <name type="scientific">Ochlerotatus taeniorhynchus</name>
    <name type="common">Black salt marsh mosquito</name>
    <name type="synonym">Aedes taeniorhynchus</name>
    <dbReference type="NCBI Taxonomy" id="329105"/>
</organismHost>
<organismHost>
    <name type="scientific">Psorophora ferox</name>
    <dbReference type="NCBI Taxonomy" id="7183"/>
</organismHost>
<reference key="1">
    <citation type="journal article" date="2006" name="J. Virol.">
        <title>Genome of invertebrate iridescent virus type 3 (mosquito iridescent virus).</title>
        <authorList>
            <person name="Delhon G."/>
            <person name="Tulman E.R."/>
            <person name="Afonso C.L."/>
            <person name="Lu Z."/>
            <person name="Becnel J.J."/>
            <person name="Moser B.A."/>
            <person name="Kutish G.F."/>
            <person name="Rock D.L."/>
        </authorList>
    </citation>
    <scope>NUCLEOTIDE SEQUENCE [LARGE SCALE GENOMIC DNA]</scope>
</reference>
<accession>Q196Y4</accession>
<feature type="chain" id="PRO_0000377500" description="Probable RAD2-like endonuclease 076L">
    <location>
        <begin position="1"/>
        <end position="380"/>
    </location>
</feature>
<feature type="region of interest" description="N-domain" evidence="1">
    <location>
        <begin position="1"/>
        <end position="101"/>
    </location>
</feature>
<feature type="region of interest" description="I-domain" evidence="1">
    <location>
        <begin position="156"/>
        <end position="301"/>
    </location>
</feature>
<feature type="binding site" evidence="1">
    <location>
        <position position="32"/>
    </location>
    <ligand>
        <name>Mg(2+)</name>
        <dbReference type="ChEBI" id="CHEBI:18420"/>
        <label>1</label>
    </ligand>
</feature>
<feature type="binding site" evidence="1">
    <location>
        <position position="73"/>
    </location>
    <ligand>
        <name>Mg(2+)</name>
        <dbReference type="ChEBI" id="CHEBI:18420"/>
        <label>1</label>
    </ligand>
</feature>
<feature type="binding site" evidence="1">
    <location>
        <position position="191"/>
    </location>
    <ligand>
        <name>Mg(2+)</name>
        <dbReference type="ChEBI" id="CHEBI:18420"/>
        <label>1</label>
    </ligand>
</feature>
<feature type="binding site" evidence="1">
    <location>
        <position position="193"/>
    </location>
    <ligand>
        <name>Mg(2+)</name>
        <dbReference type="ChEBI" id="CHEBI:18420"/>
        <label>1</label>
    </ligand>
</feature>
<feature type="binding site" evidence="1">
    <location>
        <position position="212"/>
    </location>
    <ligand>
        <name>Mg(2+)</name>
        <dbReference type="ChEBI" id="CHEBI:18420"/>
        <label>2</label>
    </ligand>
</feature>
<feature type="binding site" evidence="1">
    <location>
        <position position="214"/>
    </location>
    <ligand>
        <name>Mg(2+)</name>
        <dbReference type="ChEBI" id="CHEBI:18420"/>
        <label>2</label>
    </ligand>
</feature>
<feature type="binding site" evidence="1">
    <location>
        <position position="281"/>
    </location>
    <ligand>
        <name>Mg(2+)</name>
        <dbReference type="ChEBI" id="CHEBI:18420"/>
        <label>2</label>
    </ligand>
</feature>
<protein>
    <recommendedName>
        <fullName>Probable RAD2-like endonuclease 076L</fullName>
        <ecNumber>3.1.-.-</ecNumber>
    </recommendedName>
</protein>
<proteinExistence type="inferred from homology"/>
<dbReference type="EC" id="3.1.-.-"/>
<dbReference type="EMBL" id="DQ643392">
    <property type="protein sequence ID" value="ABF82106.1"/>
    <property type="molecule type" value="Genomic_DNA"/>
</dbReference>
<dbReference type="RefSeq" id="YP_654648.1">
    <property type="nucleotide sequence ID" value="NC_008187.1"/>
</dbReference>
<dbReference type="SMR" id="Q196Y4"/>
<dbReference type="KEGG" id="vg:4156287"/>
<dbReference type="OrthoDB" id="21654at10239"/>
<dbReference type="Proteomes" id="UP000001358">
    <property type="component" value="Genome"/>
</dbReference>
<dbReference type="GO" id="GO:0042025">
    <property type="term" value="C:host cell nucleus"/>
    <property type="evidence" value="ECO:0007669"/>
    <property type="project" value="UniProtKB-SubCell"/>
</dbReference>
<dbReference type="GO" id="GO:0017108">
    <property type="term" value="F:5'-flap endonuclease activity"/>
    <property type="evidence" value="ECO:0007669"/>
    <property type="project" value="TreeGrafter"/>
</dbReference>
<dbReference type="GO" id="GO:0046872">
    <property type="term" value="F:metal ion binding"/>
    <property type="evidence" value="ECO:0007669"/>
    <property type="project" value="UniProtKB-KW"/>
</dbReference>
<dbReference type="CDD" id="cd09897">
    <property type="entry name" value="H3TH_FEN1-XPG-like"/>
    <property type="match status" value="1"/>
</dbReference>
<dbReference type="Gene3D" id="1.10.150.20">
    <property type="entry name" value="5' to 3' exonuclease, C-terminal subdomain"/>
    <property type="match status" value="1"/>
</dbReference>
<dbReference type="Gene3D" id="3.40.50.1010">
    <property type="entry name" value="5'-nuclease"/>
    <property type="match status" value="1"/>
</dbReference>
<dbReference type="InterPro" id="IPR036279">
    <property type="entry name" value="5-3_exonuclease_C_sf"/>
</dbReference>
<dbReference type="InterPro" id="IPR029060">
    <property type="entry name" value="PIN-like_dom_sf"/>
</dbReference>
<dbReference type="InterPro" id="IPR006086">
    <property type="entry name" value="XPG-I_dom"/>
</dbReference>
<dbReference type="InterPro" id="IPR006084">
    <property type="entry name" value="XPG/Rad2"/>
</dbReference>
<dbReference type="InterPro" id="IPR006085">
    <property type="entry name" value="XPG_DNA_repair_N"/>
</dbReference>
<dbReference type="PANTHER" id="PTHR11081:SF9">
    <property type="entry name" value="FLAP ENDONUCLEASE 1"/>
    <property type="match status" value="1"/>
</dbReference>
<dbReference type="PANTHER" id="PTHR11081">
    <property type="entry name" value="FLAP ENDONUCLEASE FAMILY MEMBER"/>
    <property type="match status" value="1"/>
</dbReference>
<dbReference type="Pfam" id="PF00867">
    <property type="entry name" value="XPG_I"/>
    <property type="match status" value="1"/>
</dbReference>
<dbReference type="Pfam" id="PF00752">
    <property type="entry name" value="XPG_N"/>
    <property type="match status" value="1"/>
</dbReference>
<dbReference type="PRINTS" id="PR00853">
    <property type="entry name" value="XPGRADSUPER"/>
</dbReference>
<dbReference type="SMART" id="SM00484">
    <property type="entry name" value="XPGI"/>
    <property type="match status" value="1"/>
</dbReference>
<dbReference type="SMART" id="SM00485">
    <property type="entry name" value="XPGN"/>
    <property type="match status" value="1"/>
</dbReference>
<dbReference type="SUPFAM" id="SSF47807">
    <property type="entry name" value="5' to 3' exonuclease, C-terminal subdomain"/>
    <property type="match status" value="1"/>
</dbReference>
<dbReference type="SUPFAM" id="SSF88723">
    <property type="entry name" value="PIN domain-like"/>
    <property type="match status" value="1"/>
</dbReference>
<evidence type="ECO:0000250" key="1"/>
<evidence type="ECO:0000305" key="2"/>